<keyword id="KW-1003">Cell membrane</keyword>
<keyword id="KW-0217">Developmental protein</keyword>
<keyword id="KW-1015">Disulfide bond</keyword>
<keyword id="KW-0297">G-protein coupled receptor</keyword>
<keyword id="KW-0325">Glycoprotein</keyword>
<keyword id="KW-0472">Membrane</keyword>
<keyword id="KW-0675">Receptor</keyword>
<keyword id="KW-1185">Reference proteome</keyword>
<keyword id="KW-0732">Signal</keyword>
<keyword id="KW-0807">Transducer</keyword>
<keyword id="KW-0812">Transmembrane</keyword>
<keyword id="KW-1133">Transmembrane helix</keyword>
<keyword id="KW-0879">Wnt signaling pathway</keyword>
<dbReference type="EMBL" id="L43163">
    <property type="protein sequence ID" value="AAB38383.1"/>
    <property type="status" value="ALT_INIT"/>
    <property type="molecule type" value="mRNA"/>
</dbReference>
<dbReference type="EMBL" id="L43340">
    <property type="status" value="NOT_ANNOTATED_CDS"/>
    <property type="molecule type" value="Genomic_DNA"/>
</dbReference>
<dbReference type="EMBL" id="L43341">
    <property type="status" value="NOT_ANNOTATED_CDS"/>
    <property type="molecule type" value="Genomic_DNA"/>
</dbReference>
<dbReference type="EMBL" id="L43342">
    <property type="status" value="NOT_ANNOTATED_CDS"/>
    <property type="molecule type" value="Genomic_DNA"/>
</dbReference>
<dbReference type="EMBL" id="L43343">
    <property type="status" value="NOT_ANNOTATED_CDS"/>
    <property type="molecule type" value="Genomic_DNA"/>
</dbReference>
<dbReference type="EMBL" id="L43344">
    <property type="status" value="NOT_ANNOTATED_CDS"/>
    <property type="molecule type" value="Genomic_DNA"/>
</dbReference>
<dbReference type="EMBL" id="CH940647">
    <property type="protein sequence ID" value="EDW70732.1"/>
    <property type="molecule type" value="Genomic_DNA"/>
</dbReference>
<dbReference type="RefSeq" id="XP_002048390.2">
    <property type="nucleotide sequence ID" value="XM_002048354.2"/>
</dbReference>
<dbReference type="SMR" id="Q24760"/>
<dbReference type="FunCoup" id="Q24760">
    <property type="interactions" value="486"/>
</dbReference>
<dbReference type="STRING" id="7244.Q24760"/>
<dbReference type="GlyCosmos" id="Q24760">
    <property type="glycosylation" value="2 sites, No reported glycans"/>
</dbReference>
<dbReference type="EnsemblMetazoa" id="FBtr0227302">
    <property type="protein sequence ID" value="FBpp0225794"/>
    <property type="gene ID" value="FBgn0014841"/>
</dbReference>
<dbReference type="EnsemblMetazoa" id="XM_002048354.3">
    <property type="protein sequence ID" value="XP_002048390.2"/>
    <property type="gene ID" value="LOC6624400"/>
</dbReference>
<dbReference type="GeneID" id="6624400"/>
<dbReference type="KEGG" id="dvi:6624400"/>
<dbReference type="CTD" id="45307"/>
<dbReference type="eggNOG" id="KOG3577">
    <property type="taxonomic scope" value="Eukaryota"/>
</dbReference>
<dbReference type="HOGENOM" id="CLU_007873_2_1_1"/>
<dbReference type="InParanoid" id="Q24760"/>
<dbReference type="OMA" id="VPDHGYC"/>
<dbReference type="OrthoDB" id="10053709at2759"/>
<dbReference type="PhylomeDB" id="Q24760"/>
<dbReference type="Proteomes" id="UP000008792">
    <property type="component" value="Unassembled WGS sequence"/>
</dbReference>
<dbReference type="GO" id="GO:0016020">
    <property type="term" value="C:membrane"/>
    <property type="evidence" value="ECO:0000303"/>
    <property type="project" value="UniProtKB"/>
</dbReference>
<dbReference type="GO" id="GO:0005886">
    <property type="term" value="C:plasma membrane"/>
    <property type="evidence" value="ECO:0007669"/>
    <property type="project" value="UniProtKB-SubCell"/>
</dbReference>
<dbReference type="GO" id="GO:0004930">
    <property type="term" value="F:G protein-coupled receptor activity"/>
    <property type="evidence" value="ECO:0007669"/>
    <property type="project" value="UniProtKB-KW"/>
</dbReference>
<dbReference type="GO" id="GO:0042813">
    <property type="term" value="F:Wnt receptor activity"/>
    <property type="evidence" value="ECO:0007669"/>
    <property type="project" value="TreeGrafter"/>
</dbReference>
<dbReference type="GO" id="GO:0017147">
    <property type="term" value="F:Wnt-protein binding"/>
    <property type="evidence" value="ECO:0007669"/>
    <property type="project" value="TreeGrafter"/>
</dbReference>
<dbReference type="GO" id="GO:0060070">
    <property type="term" value="P:canonical Wnt signaling pathway"/>
    <property type="evidence" value="ECO:0007669"/>
    <property type="project" value="TreeGrafter"/>
</dbReference>
<dbReference type="GO" id="GO:0007163">
    <property type="term" value="P:establishment or maintenance of cell polarity"/>
    <property type="evidence" value="ECO:0000315"/>
    <property type="project" value="UniProtKB"/>
</dbReference>
<dbReference type="GO" id="GO:0035567">
    <property type="term" value="P:non-canonical Wnt signaling pathway"/>
    <property type="evidence" value="ECO:0007669"/>
    <property type="project" value="TreeGrafter"/>
</dbReference>
<dbReference type="CDD" id="cd15248">
    <property type="entry name" value="7tmF_FZD1_insect"/>
    <property type="match status" value="1"/>
</dbReference>
<dbReference type="CDD" id="cd07458">
    <property type="entry name" value="CRD_FZ1_like"/>
    <property type="match status" value="1"/>
</dbReference>
<dbReference type="FunFam" id="1.10.2000.10:FF:000016">
    <property type="entry name" value="Frizzled"/>
    <property type="match status" value="1"/>
</dbReference>
<dbReference type="FunFam" id="1.20.1070.10:FF:000350">
    <property type="entry name" value="Frizzled"/>
    <property type="match status" value="1"/>
</dbReference>
<dbReference type="Gene3D" id="1.10.2000.10">
    <property type="entry name" value="Frizzled cysteine-rich domain"/>
    <property type="match status" value="1"/>
</dbReference>
<dbReference type="Gene3D" id="1.20.1070.10">
    <property type="entry name" value="Rhodopsin 7-helix transmembrane proteins"/>
    <property type="match status" value="1"/>
</dbReference>
<dbReference type="InterPro" id="IPR015526">
    <property type="entry name" value="Frizzled/SFRP"/>
</dbReference>
<dbReference type="InterPro" id="IPR000539">
    <property type="entry name" value="Frizzled/Smoothened_7TM"/>
</dbReference>
<dbReference type="InterPro" id="IPR020067">
    <property type="entry name" value="Frizzled_dom"/>
</dbReference>
<dbReference type="InterPro" id="IPR036790">
    <property type="entry name" value="Frizzled_dom_sf"/>
</dbReference>
<dbReference type="InterPro" id="IPR017981">
    <property type="entry name" value="GPCR_2-like_7TM"/>
</dbReference>
<dbReference type="PANTHER" id="PTHR11309">
    <property type="entry name" value="FRIZZLED"/>
    <property type="match status" value="1"/>
</dbReference>
<dbReference type="PANTHER" id="PTHR11309:SF47">
    <property type="entry name" value="FRIZZLED"/>
    <property type="match status" value="1"/>
</dbReference>
<dbReference type="Pfam" id="PF01534">
    <property type="entry name" value="Frizzled"/>
    <property type="match status" value="1"/>
</dbReference>
<dbReference type="Pfam" id="PF01392">
    <property type="entry name" value="Fz"/>
    <property type="match status" value="1"/>
</dbReference>
<dbReference type="PRINTS" id="PR00489">
    <property type="entry name" value="FRIZZLED"/>
</dbReference>
<dbReference type="SMART" id="SM00063">
    <property type="entry name" value="FRI"/>
    <property type="match status" value="1"/>
</dbReference>
<dbReference type="SMART" id="SM01330">
    <property type="entry name" value="Frizzled"/>
    <property type="match status" value="1"/>
</dbReference>
<dbReference type="SUPFAM" id="SSF63501">
    <property type="entry name" value="Frizzled cysteine-rich domain"/>
    <property type="match status" value="1"/>
</dbReference>
<dbReference type="PROSITE" id="PS50038">
    <property type="entry name" value="FZ"/>
    <property type="match status" value="1"/>
</dbReference>
<dbReference type="PROSITE" id="PS50261">
    <property type="entry name" value="G_PROTEIN_RECEP_F2_4"/>
    <property type="match status" value="1"/>
</dbReference>
<organism>
    <name type="scientific">Drosophila virilis</name>
    <name type="common">Fruit fly</name>
    <dbReference type="NCBI Taxonomy" id="7244"/>
    <lineage>
        <taxon>Eukaryota</taxon>
        <taxon>Metazoa</taxon>
        <taxon>Ecdysozoa</taxon>
        <taxon>Arthropoda</taxon>
        <taxon>Hexapoda</taxon>
        <taxon>Insecta</taxon>
        <taxon>Pterygota</taxon>
        <taxon>Neoptera</taxon>
        <taxon>Endopterygota</taxon>
        <taxon>Diptera</taxon>
        <taxon>Brachycera</taxon>
        <taxon>Muscomorpha</taxon>
        <taxon>Ephydroidea</taxon>
        <taxon>Drosophilidae</taxon>
        <taxon>Drosophila</taxon>
    </lineage>
</organism>
<comment type="function">
    <text>Receptor for Wnt proteins. Most of frizzled receptors are coupled to the beta-catenin canonical signaling pathway, which leads to the activation of disheveled proteins, inhibition of GSK-3 kinase, nuclear accumulation of beta-catenin and activation of Wnt target genes. A second signaling pathway involving PKC and calcium fluxes has been seen for some family members, but it is not yet clear if it represents a distinct pathway or if it can be integrated in the canonical pathway, as PKC seems to be required for Wnt-mediated inactivation of GSK-3 kinase. Both pathways seem to involve interactions with G-proteins. Required to coordinate the cytoskeletons of epidermal cells to produce a parallel array of cuticular hairs and bristles.</text>
</comment>
<comment type="subcellular location">
    <subcellularLocation>
        <location evidence="1">Cell membrane</location>
        <topology evidence="1">Multi-pass membrane protein</topology>
    </subcellularLocation>
</comment>
<comment type="domain">
    <text evidence="1">Lys-Thr-X-X-X-Trp motif interacts with the PDZ domain of Dvl (Disheveled) family members and is involved in the activation of the Wnt/beta-catenin signaling pathway.</text>
</comment>
<comment type="domain">
    <text evidence="1">The FZ domain is involved in binding with Wnt ligands.</text>
</comment>
<comment type="similarity">
    <text evidence="4">Belongs to the G-protein coupled receptor Fz/Smo family.</text>
</comment>
<comment type="sequence caution" evidence="4">
    <conflict type="erroneous initiation">
        <sequence resource="EMBL-CDS" id="AAB38383"/>
    </conflict>
    <text>Extended N-terminus.</text>
</comment>
<proteinExistence type="evidence at transcript level"/>
<name>FRIZ_DROVI</name>
<reference key="1">
    <citation type="journal article" date="1996" name="Genetics">
        <title>Molecular analysis of EMS-induced frizzled mutations in Drosophila melanogaster.</title>
        <authorList>
            <person name="Jones K.H."/>
            <person name="Liu J."/>
            <person name="Adler P.N."/>
        </authorList>
    </citation>
    <scope>NUCLEOTIDE SEQUENCE [GENOMIC DNA / MRNA]</scope>
    <source>
        <tissue>Ovary</tissue>
    </source>
</reference>
<reference key="2">
    <citation type="journal article" date="2007" name="Nature">
        <title>Evolution of genes and genomes on the Drosophila phylogeny.</title>
        <authorList>
            <consortium name="Drosophila 12 genomes consortium"/>
        </authorList>
    </citation>
    <scope>NUCLEOTIDE SEQUENCE [LARGE SCALE GENOMIC DNA]</scope>
    <source>
        <strain>Tucson 15010-1051.87</strain>
    </source>
</reference>
<sequence>MLLQPLLLLLLPALLQSAQRYDQTPLDASSYYRSDLTGSSASSLDGFPHHNRCEPITISICKNIPYNMTIMPNLIGHTKQEEAGLEVHQFAPLVKIGCSADLQLFLCSLYVPVCTILERPIPPCRSLCESARVCETLMKTYNFNWPENLECSKFPVHGGEDLCVAENTTASSSTPAPTRSAPKVTTRKHQISVDSPHRNIGFVCPVQLKTPLGMGYELKVGGKDLHDCGAPCHAMFFPERERTVLRYWVGSWAAICVASCLFTVLTFLIDSSRFRYPERAIVFLAVCYLVVGCAYVAGLGAGDSVSCREPFPPPVKLGRLQMMSTITQGHRQTTACTVLFMALYFCCMAAFAWWSCLAFAWFLAAGLKWGHEAIENKSHLFHLVAWAVPALQTISVLALAKVEGDILSGVCFVGQLDTHSLGGFLILPLCIYLSIGALFLLAGFISLFRIRTVMKTDGKRTDKLERLMLRIGFFSGLFILPALGLLGCLFYEYYNFDEWMIQWHRDICKPFSIPCPAARPPGTPEARPIFQIYMVKYLCSMLVGVTSSVWLYSSKTMVSWRNFVERLQGKEPRTRAQAYV</sequence>
<accession>Q24760</accession>
<accession>B4LIE5</accession>
<protein>
    <recommendedName>
        <fullName>Frizzled</fullName>
    </recommendedName>
    <alternativeName>
        <fullName>Frizzled-1</fullName>
        <shortName>dFz1</shortName>
    </alternativeName>
</protein>
<evidence type="ECO:0000250" key="1"/>
<evidence type="ECO:0000255" key="2"/>
<evidence type="ECO:0000255" key="3">
    <source>
        <dbReference type="PROSITE-ProRule" id="PRU00090"/>
    </source>
</evidence>
<evidence type="ECO:0000305" key="4"/>
<gene>
    <name type="primary">fz</name>
    <name type="ORF">GJ11377</name>
</gene>
<feature type="signal peptide" evidence="2">
    <location>
        <begin position="1"/>
        <end position="17"/>
    </location>
</feature>
<feature type="chain" id="PRO_0000224181" description="Frizzled">
    <location>
        <begin position="18"/>
        <end position="580"/>
    </location>
</feature>
<feature type="topological domain" description="Extracellular" evidence="2">
    <location>
        <begin position="18"/>
        <end position="248"/>
    </location>
</feature>
<feature type="transmembrane region" description="Helical; Name=1" evidence="2">
    <location>
        <begin position="249"/>
        <end position="269"/>
    </location>
</feature>
<feature type="topological domain" description="Cytoplasmic" evidence="2">
    <location>
        <begin position="270"/>
        <end position="279"/>
    </location>
</feature>
<feature type="transmembrane region" description="Helical; Name=2" evidence="2">
    <location>
        <begin position="280"/>
        <end position="300"/>
    </location>
</feature>
<feature type="topological domain" description="Extracellular" evidence="2">
    <location>
        <begin position="301"/>
        <end position="342"/>
    </location>
</feature>
<feature type="transmembrane region" description="Helical; Name=3" evidence="2">
    <location>
        <begin position="343"/>
        <end position="363"/>
    </location>
</feature>
<feature type="topological domain" description="Cytoplasmic" evidence="2">
    <location>
        <begin position="364"/>
        <end position="379"/>
    </location>
</feature>
<feature type="transmembrane region" description="Helical; Name=4" evidence="2">
    <location>
        <begin position="380"/>
        <end position="400"/>
    </location>
</feature>
<feature type="topological domain" description="Extracellular" evidence="2">
    <location>
        <begin position="401"/>
        <end position="424"/>
    </location>
</feature>
<feature type="transmembrane region" description="Helical; Name=5" evidence="2">
    <location>
        <begin position="425"/>
        <end position="445"/>
    </location>
</feature>
<feature type="topological domain" description="Cytoplasmic" evidence="2">
    <location>
        <begin position="446"/>
        <end position="470"/>
    </location>
</feature>
<feature type="transmembrane region" description="Helical; Name=6" evidence="2">
    <location>
        <begin position="471"/>
        <end position="491"/>
    </location>
</feature>
<feature type="topological domain" description="Extracellular" evidence="2">
    <location>
        <begin position="492"/>
        <end position="531"/>
    </location>
</feature>
<feature type="transmembrane region" description="Helical; Name=7" evidence="2">
    <location>
        <begin position="532"/>
        <end position="552"/>
    </location>
</feature>
<feature type="topological domain" description="Cytoplasmic" evidence="2">
    <location>
        <begin position="553"/>
        <end position="580"/>
    </location>
</feature>
<feature type="domain" description="FZ" evidence="3">
    <location>
        <begin position="48"/>
        <end position="166"/>
    </location>
</feature>
<feature type="short sequence motif" description="Lys-Thr-X-X-X-Trp motif, mediates interaction with the PDZ domain of Dvl family members" evidence="1">
    <location>
        <begin position="555"/>
        <end position="560"/>
    </location>
</feature>
<feature type="short sequence motif" description="PDZ-binding" evidence="1">
    <location>
        <begin position="578"/>
        <end position="580"/>
    </location>
</feature>
<feature type="glycosylation site" description="N-linked (GlcNAc...) asparagine" evidence="2">
    <location>
        <position position="67"/>
    </location>
</feature>
<feature type="glycosylation site" description="N-linked (GlcNAc...) asparagine" evidence="2">
    <location>
        <position position="167"/>
    </location>
</feature>
<feature type="disulfide bond" evidence="3">
    <location>
        <begin position="53"/>
        <end position="114"/>
    </location>
</feature>
<feature type="disulfide bond" evidence="3">
    <location>
        <begin position="61"/>
        <end position="107"/>
    </location>
</feature>
<feature type="disulfide bond" evidence="3">
    <location>
        <begin position="98"/>
        <end position="134"/>
    </location>
</feature>
<feature type="disulfide bond" evidence="3">
    <location>
        <begin position="124"/>
        <end position="163"/>
    </location>
</feature>
<feature type="disulfide bond" evidence="3">
    <location>
        <begin position="128"/>
        <end position="151"/>
    </location>
</feature>
<feature type="sequence conflict" description="In Ref. 1; AAB38383." evidence="4" ref="1">
    <original>L</original>
    <variation>M</variation>
    <location>
        <position position="11"/>
    </location>
</feature>
<feature type="sequence conflict" description="In Ref. 1; AAB38383." evidence="4" ref="1">
    <original>QRYDQTPL</original>
    <variation>TIDTV</variation>
    <location>
        <begin position="19"/>
        <end position="26"/>
    </location>
</feature>
<feature type="sequence conflict" description="In Ref. 1; AAB38383." evidence="4" ref="1">
    <original>S</original>
    <variation>T</variation>
    <location>
        <position position="259"/>
    </location>
</feature>
<feature type="sequence conflict" description="In Ref. 1; AAB38383." evidence="4" ref="1">
    <original>A</original>
    <variation>G</variation>
    <location>
        <position position="482"/>
    </location>
</feature>
<feature type="sequence conflict" description="In Ref. 1; AAB38383." evidence="4" ref="1">
    <original>D</original>
    <variation>H</variation>
    <location>
        <position position="506"/>
    </location>
</feature>